<name>RLMH_DICT6</name>
<sequence>MNIKIIVIGKIRNEFIKAGVNEYLKRLLPFINIKIEFLPSFSELSEKIALLKEEEIILKNLRNGEFIITLDKDGEKISSEEFSKKLFKLPISQNSQITFIIGGIYGVSEKIKQSSNFILSLSSMTFTHEFALLILLEQIYRALKIQRNEPYHY</sequence>
<proteinExistence type="inferred from homology"/>
<accession>B5YER1</accession>
<feature type="chain" id="PRO_0000366589" description="Ribosomal RNA large subunit methyltransferase H">
    <location>
        <begin position="1"/>
        <end position="153"/>
    </location>
</feature>
<feature type="binding site" evidence="1">
    <location>
        <position position="70"/>
    </location>
    <ligand>
        <name>S-adenosyl-L-methionine</name>
        <dbReference type="ChEBI" id="CHEBI:59789"/>
    </ligand>
</feature>
<feature type="binding site" evidence="1">
    <location>
        <position position="102"/>
    </location>
    <ligand>
        <name>S-adenosyl-L-methionine</name>
        <dbReference type="ChEBI" id="CHEBI:59789"/>
    </ligand>
</feature>
<feature type="binding site" evidence="1">
    <location>
        <begin position="121"/>
        <end position="126"/>
    </location>
    <ligand>
        <name>S-adenosyl-L-methionine</name>
        <dbReference type="ChEBI" id="CHEBI:59789"/>
    </ligand>
</feature>
<comment type="function">
    <text evidence="1">Specifically methylates the pseudouridine at position 1915 (m3Psi1915) in 23S rRNA.</text>
</comment>
<comment type="catalytic activity">
    <reaction evidence="1">
        <text>pseudouridine(1915) in 23S rRNA + S-adenosyl-L-methionine = N(3)-methylpseudouridine(1915) in 23S rRNA + S-adenosyl-L-homocysteine + H(+)</text>
        <dbReference type="Rhea" id="RHEA:42752"/>
        <dbReference type="Rhea" id="RHEA-COMP:10221"/>
        <dbReference type="Rhea" id="RHEA-COMP:10222"/>
        <dbReference type="ChEBI" id="CHEBI:15378"/>
        <dbReference type="ChEBI" id="CHEBI:57856"/>
        <dbReference type="ChEBI" id="CHEBI:59789"/>
        <dbReference type="ChEBI" id="CHEBI:65314"/>
        <dbReference type="ChEBI" id="CHEBI:74486"/>
        <dbReference type="EC" id="2.1.1.177"/>
    </reaction>
</comment>
<comment type="subunit">
    <text evidence="1">Homodimer.</text>
</comment>
<comment type="subcellular location">
    <subcellularLocation>
        <location evidence="1">Cytoplasm</location>
    </subcellularLocation>
</comment>
<comment type="similarity">
    <text evidence="1">Belongs to the RNA methyltransferase RlmH family.</text>
</comment>
<dbReference type="EC" id="2.1.1.177" evidence="1"/>
<dbReference type="EMBL" id="CP001146">
    <property type="protein sequence ID" value="ACI19262.1"/>
    <property type="molecule type" value="Genomic_DNA"/>
</dbReference>
<dbReference type="RefSeq" id="WP_012547894.1">
    <property type="nucleotide sequence ID" value="NC_011297.1"/>
</dbReference>
<dbReference type="SMR" id="B5YER1"/>
<dbReference type="STRING" id="309799.DICTH_1190"/>
<dbReference type="PaxDb" id="309799-DICTH_1190"/>
<dbReference type="KEGG" id="dth:DICTH_1190"/>
<dbReference type="eggNOG" id="COG1576">
    <property type="taxonomic scope" value="Bacteria"/>
</dbReference>
<dbReference type="HOGENOM" id="CLU_100552_0_0_0"/>
<dbReference type="OrthoDB" id="9806643at2"/>
<dbReference type="Proteomes" id="UP000001733">
    <property type="component" value="Chromosome"/>
</dbReference>
<dbReference type="GO" id="GO:0005737">
    <property type="term" value="C:cytoplasm"/>
    <property type="evidence" value="ECO:0007669"/>
    <property type="project" value="UniProtKB-SubCell"/>
</dbReference>
<dbReference type="GO" id="GO:0070038">
    <property type="term" value="F:rRNA (pseudouridine-N3-)-methyltransferase activity"/>
    <property type="evidence" value="ECO:0007669"/>
    <property type="project" value="UniProtKB-UniRule"/>
</dbReference>
<dbReference type="CDD" id="cd18081">
    <property type="entry name" value="RlmH-like"/>
    <property type="match status" value="1"/>
</dbReference>
<dbReference type="Gene3D" id="3.40.1280.10">
    <property type="match status" value="1"/>
</dbReference>
<dbReference type="HAMAP" id="MF_00658">
    <property type="entry name" value="23SrRNA_methyltr_H"/>
    <property type="match status" value="1"/>
</dbReference>
<dbReference type="InterPro" id="IPR029028">
    <property type="entry name" value="Alpha/beta_knot_MTases"/>
</dbReference>
<dbReference type="InterPro" id="IPR003742">
    <property type="entry name" value="RlmH-like"/>
</dbReference>
<dbReference type="InterPro" id="IPR029026">
    <property type="entry name" value="tRNA_m1G_MTases_N"/>
</dbReference>
<dbReference type="PANTHER" id="PTHR33603">
    <property type="entry name" value="METHYLTRANSFERASE"/>
    <property type="match status" value="1"/>
</dbReference>
<dbReference type="PANTHER" id="PTHR33603:SF1">
    <property type="entry name" value="RIBOSOMAL RNA LARGE SUBUNIT METHYLTRANSFERASE H"/>
    <property type="match status" value="1"/>
</dbReference>
<dbReference type="Pfam" id="PF02590">
    <property type="entry name" value="SPOUT_MTase"/>
    <property type="match status" value="1"/>
</dbReference>
<dbReference type="PIRSF" id="PIRSF004505">
    <property type="entry name" value="MT_bac"/>
    <property type="match status" value="1"/>
</dbReference>
<dbReference type="SUPFAM" id="SSF75217">
    <property type="entry name" value="alpha/beta knot"/>
    <property type="match status" value="1"/>
</dbReference>
<evidence type="ECO:0000255" key="1">
    <source>
        <dbReference type="HAMAP-Rule" id="MF_00658"/>
    </source>
</evidence>
<keyword id="KW-0963">Cytoplasm</keyword>
<keyword id="KW-0489">Methyltransferase</keyword>
<keyword id="KW-0698">rRNA processing</keyword>
<keyword id="KW-0949">S-adenosyl-L-methionine</keyword>
<keyword id="KW-0808">Transferase</keyword>
<organism>
    <name type="scientific">Dictyoglomus thermophilum (strain ATCC 35947 / DSM 3960 / H-6-12)</name>
    <dbReference type="NCBI Taxonomy" id="309799"/>
    <lineage>
        <taxon>Bacteria</taxon>
        <taxon>Pseudomonadati</taxon>
        <taxon>Dictyoglomota</taxon>
        <taxon>Dictyoglomia</taxon>
        <taxon>Dictyoglomales</taxon>
        <taxon>Dictyoglomaceae</taxon>
        <taxon>Dictyoglomus</taxon>
    </lineage>
</organism>
<reference key="1">
    <citation type="journal article" date="2014" name="Genome Announc.">
        <title>Complete Genome Sequence of the Extreme Thermophile Dictyoglomus thermophilum H-6-12.</title>
        <authorList>
            <person name="Coil D.A."/>
            <person name="Badger J.H."/>
            <person name="Forberger H.C."/>
            <person name="Riggs F."/>
            <person name="Madupu R."/>
            <person name="Fedorova N."/>
            <person name="Ward N."/>
            <person name="Robb F.T."/>
            <person name="Eisen J.A."/>
        </authorList>
    </citation>
    <scope>NUCLEOTIDE SEQUENCE [LARGE SCALE GENOMIC DNA]</scope>
    <source>
        <strain>ATCC 35947 / DSM 3960 / H-6-12</strain>
    </source>
</reference>
<gene>
    <name evidence="1" type="primary">rlmH</name>
    <name type="ordered locus">DICTH_1190</name>
</gene>
<protein>
    <recommendedName>
        <fullName evidence="1">Ribosomal RNA large subunit methyltransferase H</fullName>
        <ecNumber evidence="1">2.1.1.177</ecNumber>
    </recommendedName>
    <alternativeName>
        <fullName evidence="1">23S rRNA (pseudouridine1915-N3)-methyltransferase</fullName>
    </alternativeName>
    <alternativeName>
        <fullName evidence="1">23S rRNA m3Psi1915 methyltransferase</fullName>
    </alternativeName>
    <alternativeName>
        <fullName evidence="1">rRNA (pseudouridine-N3-)-methyltransferase RlmH</fullName>
    </alternativeName>
</protein>